<name>ATPF_LEUCK</name>
<sequence length="169" mass="18172">MFGLTTLAANKLPLGNMLFIIISFLVLMVILKKVAYGPLTKVLDERAEKISTDIDGAESARQEAENLAAQRQSELADTRQQATKVVADAKASAQKQSDALVAVAAERANTINQQAQTDAEKLKEDAIANAKNDVAALSVAIASKLMQKELSLNDQQALIDAYISDLETK</sequence>
<protein>
    <recommendedName>
        <fullName evidence="1">ATP synthase subunit b</fullName>
    </recommendedName>
    <alternativeName>
        <fullName evidence="1">ATP synthase F(0) sector subunit b</fullName>
    </alternativeName>
    <alternativeName>
        <fullName evidence="1">ATPase subunit I</fullName>
    </alternativeName>
    <alternativeName>
        <fullName evidence="1">F-type ATPase subunit b</fullName>
        <shortName evidence="1">F-ATPase subunit b</shortName>
    </alternativeName>
</protein>
<dbReference type="EMBL" id="DQ489736">
    <property type="protein sequence ID" value="ACA83454.1"/>
    <property type="molecule type" value="Genomic_DNA"/>
</dbReference>
<dbReference type="RefSeq" id="WP_004902062.1">
    <property type="nucleotide sequence ID" value="NC_010471.1"/>
</dbReference>
<dbReference type="SMR" id="B1MW89"/>
<dbReference type="STRING" id="349519.LCK_01631"/>
<dbReference type="GeneID" id="61103185"/>
<dbReference type="KEGG" id="lci:LCK_01631"/>
<dbReference type="eggNOG" id="COG0711">
    <property type="taxonomic scope" value="Bacteria"/>
</dbReference>
<dbReference type="HOGENOM" id="CLU_079215_4_2_9"/>
<dbReference type="OrthoDB" id="282095at2"/>
<dbReference type="Proteomes" id="UP000002166">
    <property type="component" value="Chromosome"/>
</dbReference>
<dbReference type="GO" id="GO:0005886">
    <property type="term" value="C:plasma membrane"/>
    <property type="evidence" value="ECO:0007669"/>
    <property type="project" value="UniProtKB-SubCell"/>
</dbReference>
<dbReference type="GO" id="GO:0045259">
    <property type="term" value="C:proton-transporting ATP synthase complex"/>
    <property type="evidence" value="ECO:0007669"/>
    <property type="project" value="UniProtKB-KW"/>
</dbReference>
<dbReference type="GO" id="GO:0046933">
    <property type="term" value="F:proton-transporting ATP synthase activity, rotational mechanism"/>
    <property type="evidence" value="ECO:0007669"/>
    <property type="project" value="UniProtKB-UniRule"/>
</dbReference>
<dbReference type="GO" id="GO:0046961">
    <property type="term" value="F:proton-transporting ATPase activity, rotational mechanism"/>
    <property type="evidence" value="ECO:0007669"/>
    <property type="project" value="TreeGrafter"/>
</dbReference>
<dbReference type="CDD" id="cd06503">
    <property type="entry name" value="ATP-synt_Fo_b"/>
    <property type="match status" value="1"/>
</dbReference>
<dbReference type="HAMAP" id="MF_01398">
    <property type="entry name" value="ATP_synth_b_bprime"/>
    <property type="match status" value="1"/>
</dbReference>
<dbReference type="InterPro" id="IPR002146">
    <property type="entry name" value="ATP_synth_b/b'su_bac/chlpt"/>
</dbReference>
<dbReference type="InterPro" id="IPR005864">
    <property type="entry name" value="ATP_synth_F0_bsu_bac"/>
</dbReference>
<dbReference type="InterPro" id="IPR050059">
    <property type="entry name" value="ATP_synthase_B_chain"/>
</dbReference>
<dbReference type="NCBIfam" id="TIGR01144">
    <property type="entry name" value="ATP_synt_b"/>
    <property type="match status" value="1"/>
</dbReference>
<dbReference type="PANTHER" id="PTHR33445:SF1">
    <property type="entry name" value="ATP SYNTHASE SUBUNIT B"/>
    <property type="match status" value="1"/>
</dbReference>
<dbReference type="PANTHER" id="PTHR33445">
    <property type="entry name" value="ATP SYNTHASE SUBUNIT B', CHLOROPLASTIC"/>
    <property type="match status" value="1"/>
</dbReference>
<dbReference type="Pfam" id="PF00430">
    <property type="entry name" value="ATP-synt_B"/>
    <property type="match status" value="1"/>
</dbReference>
<feature type="chain" id="PRO_0000368564" description="ATP synthase subunit b">
    <location>
        <begin position="1"/>
        <end position="169"/>
    </location>
</feature>
<feature type="transmembrane region" description="Helical" evidence="1">
    <location>
        <begin position="11"/>
        <end position="31"/>
    </location>
</feature>
<organism>
    <name type="scientific">Leuconostoc citreum (strain KM20)</name>
    <dbReference type="NCBI Taxonomy" id="349519"/>
    <lineage>
        <taxon>Bacteria</taxon>
        <taxon>Bacillati</taxon>
        <taxon>Bacillota</taxon>
        <taxon>Bacilli</taxon>
        <taxon>Lactobacillales</taxon>
        <taxon>Lactobacillaceae</taxon>
        <taxon>Leuconostoc</taxon>
    </lineage>
</organism>
<reference key="1">
    <citation type="journal article" date="2008" name="J. Bacteriol.">
        <title>Complete genome sequence of Leuconostoc citreum KM20.</title>
        <authorList>
            <person name="Kim J.F."/>
            <person name="Jeong H."/>
            <person name="Lee J.-S."/>
            <person name="Choi S.-H."/>
            <person name="Ha M."/>
            <person name="Hur C.-G."/>
            <person name="Kim J.-S."/>
            <person name="Lee S."/>
            <person name="Park H.-S."/>
            <person name="Park Y.-H."/>
            <person name="Oh T.K."/>
        </authorList>
    </citation>
    <scope>NUCLEOTIDE SEQUENCE [LARGE SCALE GENOMIC DNA]</scope>
    <source>
        <strain>KM20</strain>
    </source>
</reference>
<proteinExistence type="inferred from homology"/>
<keyword id="KW-0066">ATP synthesis</keyword>
<keyword id="KW-1003">Cell membrane</keyword>
<keyword id="KW-0138">CF(0)</keyword>
<keyword id="KW-0375">Hydrogen ion transport</keyword>
<keyword id="KW-0406">Ion transport</keyword>
<keyword id="KW-0472">Membrane</keyword>
<keyword id="KW-1185">Reference proteome</keyword>
<keyword id="KW-0812">Transmembrane</keyword>
<keyword id="KW-1133">Transmembrane helix</keyword>
<keyword id="KW-0813">Transport</keyword>
<comment type="function">
    <text evidence="1">F(1)F(0) ATP synthase produces ATP from ADP in the presence of a proton or sodium gradient. F-type ATPases consist of two structural domains, F(1) containing the extramembraneous catalytic core and F(0) containing the membrane proton channel, linked together by a central stalk and a peripheral stalk. During catalysis, ATP synthesis in the catalytic domain of F(1) is coupled via a rotary mechanism of the central stalk subunits to proton translocation.</text>
</comment>
<comment type="function">
    <text evidence="1">Component of the F(0) channel, it forms part of the peripheral stalk, linking F(1) to F(0).</text>
</comment>
<comment type="subunit">
    <text evidence="1">F-type ATPases have 2 components, F(1) - the catalytic core - and F(0) - the membrane proton channel. F(1) has five subunits: alpha(3), beta(3), gamma(1), delta(1), epsilon(1). F(0) has three main subunits: a(1), b(2) and c(10-14). The alpha and beta chains form an alternating ring which encloses part of the gamma chain. F(1) is attached to F(0) by a central stalk formed by the gamma and epsilon chains, while a peripheral stalk is formed by the delta and b chains.</text>
</comment>
<comment type="subcellular location">
    <subcellularLocation>
        <location evidence="1">Cell membrane</location>
        <topology evidence="1">Single-pass membrane protein</topology>
    </subcellularLocation>
</comment>
<comment type="similarity">
    <text evidence="1">Belongs to the ATPase B chain family.</text>
</comment>
<evidence type="ECO:0000255" key="1">
    <source>
        <dbReference type="HAMAP-Rule" id="MF_01398"/>
    </source>
</evidence>
<accession>B1MW89</accession>
<gene>
    <name evidence="1" type="primary">atpF</name>
    <name type="ordered locus">LCK_01631</name>
</gene>